<proteinExistence type="inferred from homology"/>
<reference key="1">
    <citation type="submission" date="2007-10" db="EMBL/GenBank/DDBJ databases">
        <title>Complete sequence of Salinispora arenicola CNS-205.</title>
        <authorList>
            <consortium name="US DOE Joint Genome Institute"/>
            <person name="Copeland A."/>
            <person name="Lucas S."/>
            <person name="Lapidus A."/>
            <person name="Barry K."/>
            <person name="Glavina del Rio T."/>
            <person name="Dalin E."/>
            <person name="Tice H."/>
            <person name="Pitluck S."/>
            <person name="Foster B."/>
            <person name="Schmutz J."/>
            <person name="Larimer F."/>
            <person name="Land M."/>
            <person name="Hauser L."/>
            <person name="Kyrpides N."/>
            <person name="Ivanova N."/>
            <person name="Jensen P.R."/>
            <person name="Moore B.S."/>
            <person name="Penn K."/>
            <person name="Jenkins C."/>
            <person name="Udwary D."/>
            <person name="Xiang L."/>
            <person name="Gontang E."/>
            <person name="Richardson P."/>
        </authorList>
    </citation>
    <scope>NUCLEOTIDE SEQUENCE [LARGE SCALE GENOMIC DNA]</scope>
    <source>
        <strain>CNS-205</strain>
    </source>
</reference>
<evidence type="ECO:0000255" key="1">
    <source>
        <dbReference type="HAMAP-Rule" id="MF_01322"/>
    </source>
</evidence>
<organism>
    <name type="scientific">Salinispora arenicola (strain CNS-205)</name>
    <dbReference type="NCBI Taxonomy" id="391037"/>
    <lineage>
        <taxon>Bacteria</taxon>
        <taxon>Bacillati</taxon>
        <taxon>Actinomycetota</taxon>
        <taxon>Actinomycetes</taxon>
        <taxon>Micromonosporales</taxon>
        <taxon>Micromonosporaceae</taxon>
        <taxon>Salinispora</taxon>
    </lineage>
</organism>
<sequence length="1297" mass="144165">MLDVNFFDELRIGLATADDIRQWSHGEVKKPETINYRTLKPEKDGLFCEKIFGPQRDWECYCGKYKRVRFKGIICERCGVEVTRSKVRRERMGHIELAASVTHIWYFKGVPSRLGYLLDLAPKDLEKIIYFASYVVTSVDAEARHRDLATIENEILAEKRQSENSRDSEIEKRAGKLEADLAELEAEGAKADVRRKVKEGGEREMRQIRDRAQREIDRLDEVLDTFRKLEPKQLVTDELLYRELRDRFGEYFTGGMGAEAIKALVQNMDLDAEAESLRETIRTGKGQRKIRALKRLKVVAAFLNTRNSPLGMVLDCVPVIPPDLRPMVQLDGGRFATSDLNDLYRRVINRNNRLKRLIDLGAPEIIVNNEKRMLQEAVDALFDNGRRGRPVTGPGNRPLKSLSDMLKGKQGRFRQNLLGKRVDYSGRSVIVVGPKLKLHQCGLPKQMALELFKPFVMKRLVDLNHAQNIKSAKRMVERQRPVVWDVLEEVIGEHPVLLNRAPTLHRLGIQAFEPQLVEGKAIQIHPLVCTAFNADFDGDQMAVHVPLSAEAQAEARILMLSSNNILKPADGKPVTMPTQDMIIGLYHLTHRTSGERGEGRAFSSDAEARMAFDNGELHLQAPVKIRLRGLVGVETGPGAESWTAPEGWVEGDPITVETTLGRVLFNEALPPGYRFVNYEIRKGQLSAIVNDLAERFPKVALAATLDGLKEAGFHWATWSGVTIGMEDVLAPPRKREVLDRYEKEADRIDKQYQRGLMTAEERRGELIEIWTKATNEVAKEMDTALPQENPLWKMINSGARGNLLQLRQIAAIRGLVANPKGEIIPRPIKASYREGLSVLEYFISTHGARKGLADTALRTADSGYLTRRLVDVSQDVIIREEDCGTDRAIPMQVGQQTGEAGSLVVHEHAETSVHARTLADDIKGPDGTVVAERGADINSILVDRIVAAGVESVRVRSVLTCESKLGVCGACYGRSLPTGKTVDVGEAVGIIAAQSIGEPGTQLTMRTFHTGGVAGEDITQGLPRVQEIFEARIPKGKAPIADTPGRVRLEDGERSRKIIVVPDDGSDEIVYDKISKRVRLLANDGDHVEVGEKLTVGTIDPHELLRILGPRAVQVHLTQEVQEVYRSQGVLIHDKHIEIIIRQMLKRVTVIDSGSTEFLPGVLVDRALFESENRRLVSEGGEPAAGRPVLMGITKASLATDSWLSAASFQETTRVLTDAAIHARSDSLIGLKENVIIGKLIPAGTGISKYRNVRVEPTEEAKAKVYSMTGYPETDYGFGPASGQAVPLDDFDFGSYR</sequence>
<protein>
    <recommendedName>
        <fullName evidence="1">DNA-directed RNA polymerase subunit beta'</fullName>
        <shortName evidence="1">RNAP subunit beta'</shortName>
        <ecNumber evidence="1">2.7.7.6</ecNumber>
    </recommendedName>
    <alternativeName>
        <fullName evidence="1">RNA polymerase subunit beta'</fullName>
    </alternativeName>
    <alternativeName>
        <fullName evidence="1">Transcriptase subunit beta'</fullName>
    </alternativeName>
</protein>
<keyword id="KW-0240">DNA-directed RNA polymerase</keyword>
<keyword id="KW-0460">Magnesium</keyword>
<keyword id="KW-0479">Metal-binding</keyword>
<keyword id="KW-0548">Nucleotidyltransferase</keyword>
<keyword id="KW-0804">Transcription</keyword>
<keyword id="KW-0808">Transferase</keyword>
<keyword id="KW-0862">Zinc</keyword>
<name>RPOC_SALAI</name>
<gene>
    <name evidence="1" type="primary">rpoC</name>
    <name type="ordered locus">Sare_4324</name>
</gene>
<accession>A8M538</accession>
<dbReference type="EC" id="2.7.7.6" evidence="1"/>
<dbReference type="EMBL" id="CP000850">
    <property type="protein sequence ID" value="ABW00106.1"/>
    <property type="molecule type" value="Genomic_DNA"/>
</dbReference>
<dbReference type="SMR" id="A8M538"/>
<dbReference type="STRING" id="391037.Sare_4324"/>
<dbReference type="KEGG" id="saq:Sare_4324"/>
<dbReference type="PATRIC" id="fig|391037.6.peg.4365"/>
<dbReference type="eggNOG" id="COG0086">
    <property type="taxonomic scope" value="Bacteria"/>
</dbReference>
<dbReference type="HOGENOM" id="CLU_000524_3_1_11"/>
<dbReference type="OrthoDB" id="9815296at2"/>
<dbReference type="GO" id="GO:0000428">
    <property type="term" value="C:DNA-directed RNA polymerase complex"/>
    <property type="evidence" value="ECO:0007669"/>
    <property type="project" value="UniProtKB-KW"/>
</dbReference>
<dbReference type="GO" id="GO:0003677">
    <property type="term" value="F:DNA binding"/>
    <property type="evidence" value="ECO:0007669"/>
    <property type="project" value="UniProtKB-UniRule"/>
</dbReference>
<dbReference type="GO" id="GO:0003899">
    <property type="term" value="F:DNA-directed RNA polymerase activity"/>
    <property type="evidence" value="ECO:0007669"/>
    <property type="project" value="UniProtKB-UniRule"/>
</dbReference>
<dbReference type="GO" id="GO:0000287">
    <property type="term" value="F:magnesium ion binding"/>
    <property type="evidence" value="ECO:0007669"/>
    <property type="project" value="UniProtKB-UniRule"/>
</dbReference>
<dbReference type="GO" id="GO:0008270">
    <property type="term" value="F:zinc ion binding"/>
    <property type="evidence" value="ECO:0007669"/>
    <property type="project" value="UniProtKB-UniRule"/>
</dbReference>
<dbReference type="GO" id="GO:0006351">
    <property type="term" value="P:DNA-templated transcription"/>
    <property type="evidence" value="ECO:0007669"/>
    <property type="project" value="UniProtKB-UniRule"/>
</dbReference>
<dbReference type="CDD" id="cd02655">
    <property type="entry name" value="RNAP_beta'_C"/>
    <property type="match status" value="1"/>
</dbReference>
<dbReference type="CDD" id="cd01609">
    <property type="entry name" value="RNAP_beta'_N"/>
    <property type="match status" value="1"/>
</dbReference>
<dbReference type="FunFam" id="1.10.150.390:FF:000002">
    <property type="entry name" value="DNA-directed RNA polymerase subunit beta"/>
    <property type="match status" value="1"/>
</dbReference>
<dbReference type="FunFam" id="1.10.40.90:FF:000001">
    <property type="entry name" value="DNA-directed RNA polymerase subunit beta"/>
    <property type="match status" value="1"/>
</dbReference>
<dbReference type="FunFam" id="4.10.860.120:FF:000001">
    <property type="entry name" value="DNA-directed RNA polymerase subunit beta"/>
    <property type="match status" value="1"/>
</dbReference>
<dbReference type="Gene3D" id="1.10.132.30">
    <property type="match status" value="1"/>
</dbReference>
<dbReference type="Gene3D" id="1.10.150.390">
    <property type="match status" value="1"/>
</dbReference>
<dbReference type="Gene3D" id="1.10.1790.20">
    <property type="match status" value="1"/>
</dbReference>
<dbReference type="Gene3D" id="1.10.40.90">
    <property type="match status" value="1"/>
</dbReference>
<dbReference type="Gene3D" id="2.40.40.20">
    <property type="match status" value="1"/>
</dbReference>
<dbReference type="Gene3D" id="2.40.50.100">
    <property type="match status" value="1"/>
</dbReference>
<dbReference type="Gene3D" id="4.10.860.120">
    <property type="entry name" value="RNA polymerase II, clamp domain"/>
    <property type="match status" value="1"/>
</dbReference>
<dbReference type="Gene3D" id="1.10.274.100">
    <property type="entry name" value="RNA polymerase Rpb1, domain 3"/>
    <property type="match status" value="1"/>
</dbReference>
<dbReference type="HAMAP" id="MF_01322">
    <property type="entry name" value="RNApol_bact_RpoC"/>
    <property type="match status" value="1"/>
</dbReference>
<dbReference type="InterPro" id="IPR045867">
    <property type="entry name" value="DNA-dir_RpoC_beta_prime"/>
</dbReference>
<dbReference type="InterPro" id="IPR012754">
    <property type="entry name" value="DNA-dir_RpoC_beta_prime_bact"/>
</dbReference>
<dbReference type="InterPro" id="IPR000722">
    <property type="entry name" value="RNA_pol_asu"/>
</dbReference>
<dbReference type="InterPro" id="IPR006592">
    <property type="entry name" value="RNA_pol_N"/>
</dbReference>
<dbReference type="InterPro" id="IPR007080">
    <property type="entry name" value="RNA_pol_Rpb1_1"/>
</dbReference>
<dbReference type="InterPro" id="IPR007066">
    <property type="entry name" value="RNA_pol_Rpb1_3"/>
</dbReference>
<dbReference type="InterPro" id="IPR042102">
    <property type="entry name" value="RNA_pol_Rpb1_3_sf"/>
</dbReference>
<dbReference type="InterPro" id="IPR007083">
    <property type="entry name" value="RNA_pol_Rpb1_4"/>
</dbReference>
<dbReference type="InterPro" id="IPR007081">
    <property type="entry name" value="RNA_pol_Rpb1_5"/>
</dbReference>
<dbReference type="InterPro" id="IPR044893">
    <property type="entry name" value="RNA_pol_Rpb1_clamp_domain"/>
</dbReference>
<dbReference type="InterPro" id="IPR038120">
    <property type="entry name" value="Rpb1_funnel_sf"/>
</dbReference>
<dbReference type="NCBIfam" id="NF011498">
    <property type="entry name" value="PRK14906.1"/>
    <property type="match status" value="1"/>
</dbReference>
<dbReference type="NCBIfam" id="TIGR02386">
    <property type="entry name" value="rpoC_TIGR"/>
    <property type="match status" value="1"/>
</dbReference>
<dbReference type="PANTHER" id="PTHR19376">
    <property type="entry name" value="DNA-DIRECTED RNA POLYMERASE"/>
    <property type="match status" value="1"/>
</dbReference>
<dbReference type="PANTHER" id="PTHR19376:SF54">
    <property type="entry name" value="DNA-DIRECTED RNA POLYMERASE SUBUNIT BETA"/>
    <property type="match status" value="1"/>
</dbReference>
<dbReference type="Pfam" id="PF04997">
    <property type="entry name" value="RNA_pol_Rpb1_1"/>
    <property type="match status" value="1"/>
</dbReference>
<dbReference type="Pfam" id="PF00623">
    <property type="entry name" value="RNA_pol_Rpb1_2"/>
    <property type="match status" value="2"/>
</dbReference>
<dbReference type="Pfam" id="PF04983">
    <property type="entry name" value="RNA_pol_Rpb1_3"/>
    <property type="match status" value="1"/>
</dbReference>
<dbReference type="Pfam" id="PF05000">
    <property type="entry name" value="RNA_pol_Rpb1_4"/>
    <property type="match status" value="1"/>
</dbReference>
<dbReference type="Pfam" id="PF04998">
    <property type="entry name" value="RNA_pol_Rpb1_5"/>
    <property type="match status" value="1"/>
</dbReference>
<dbReference type="SMART" id="SM00663">
    <property type="entry name" value="RPOLA_N"/>
    <property type="match status" value="1"/>
</dbReference>
<dbReference type="SUPFAM" id="SSF64484">
    <property type="entry name" value="beta and beta-prime subunits of DNA dependent RNA-polymerase"/>
    <property type="match status" value="1"/>
</dbReference>
<feature type="chain" id="PRO_1000086412" description="DNA-directed RNA polymerase subunit beta'">
    <location>
        <begin position="1"/>
        <end position="1297"/>
    </location>
</feature>
<feature type="binding site" evidence="1">
    <location>
        <position position="60"/>
    </location>
    <ligand>
        <name>Zn(2+)</name>
        <dbReference type="ChEBI" id="CHEBI:29105"/>
        <label>1</label>
    </ligand>
</feature>
<feature type="binding site" evidence="1">
    <location>
        <position position="62"/>
    </location>
    <ligand>
        <name>Zn(2+)</name>
        <dbReference type="ChEBI" id="CHEBI:29105"/>
        <label>1</label>
    </ligand>
</feature>
<feature type="binding site" evidence="1">
    <location>
        <position position="75"/>
    </location>
    <ligand>
        <name>Zn(2+)</name>
        <dbReference type="ChEBI" id="CHEBI:29105"/>
        <label>1</label>
    </ligand>
</feature>
<feature type="binding site" evidence="1">
    <location>
        <position position="78"/>
    </location>
    <ligand>
        <name>Zn(2+)</name>
        <dbReference type="ChEBI" id="CHEBI:29105"/>
        <label>1</label>
    </ligand>
</feature>
<feature type="binding site" evidence="1">
    <location>
        <position position="535"/>
    </location>
    <ligand>
        <name>Mg(2+)</name>
        <dbReference type="ChEBI" id="CHEBI:18420"/>
    </ligand>
</feature>
<feature type="binding site" evidence="1">
    <location>
        <position position="537"/>
    </location>
    <ligand>
        <name>Mg(2+)</name>
        <dbReference type="ChEBI" id="CHEBI:18420"/>
    </ligand>
</feature>
<feature type="binding site" evidence="1">
    <location>
        <position position="539"/>
    </location>
    <ligand>
        <name>Mg(2+)</name>
        <dbReference type="ChEBI" id="CHEBI:18420"/>
    </ligand>
</feature>
<feature type="binding site" evidence="1">
    <location>
        <position position="883"/>
    </location>
    <ligand>
        <name>Zn(2+)</name>
        <dbReference type="ChEBI" id="CHEBI:29105"/>
        <label>2</label>
    </ligand>
</feature>
<feature type="binding site" evidence="1">
    <location>
        <position position="961"/>
    </location>
    <ligand>
        <name>Zn(2+)</name>
        <dbReference type="ChEBI" id="CHEBI:29105"/>
        <label>2</label>
    </ligand>
</feature>
<feature type="binding site" evidence="1">
    <location>
        <position position="968"/>
    </location>
    <ligand>
        <name>Zn(2+)</name>
        <dbReference type="ChEBI" id="CHEBI:29105"/>
        <label>2</label>
    </ligand>
</feature>
<feature type="binding site" evidence="1">
    <location>
        <position position="971"/>
    </location>
    <ligand>
        <name>Zn(2+)</name>
        <dbReference type="ChEBI" id="CHEBI:29105"/>
        <label>2</label>
    </ligand>
</feature>
<comment type="function">
    <text evidence="1">DNA-dependent RNA polymerase catalyzes the transcription of DNA into RNA using the four ribonucleoside triphosphates as substrates.</text>
</comment>
<comment type="catalytic activity">
    <reaction evidence="1">
        <text>RNA(n) + a ribonucleoside 5'-triphosphate = RNA(n+1) + diphosphate</text>
        <dbReference type="Rhea" id="RHEA:21248"/>
        <dbReference type="Rhea" id="RHEA-COMP:14527"/>
        <dbReference type="Rhea" id="RHEA-COMP:17342"/>
        <dbReference type="ChEBI" id="CHEBI:33019"/>
        <dbReference type="ChEBI" id="CHEBI:61557"/>
        <dbReference type="ChEBI" id="CHEBI:140395"/>
        <dbReference type="EC" id="2.7.7.6"/>
    </reaction>
</comment>
<comment type="cofactor">
    <cofactor evidence="1">
        <name>Mg(2+)</name>
        <dbReference type="ChEBI" id="CHEBI:18420"/>
    </cofactor>
    <text evidence="1">Binds 1 Mg(2+) ion per subunit.</text>
</comment>
<comment type="cofactor">
    <cofactor evidence="1">
        <name>Zn(2+)</name>
        <dbReference type="ChEBI" id="CHEBI:29105"/>
    </cofactor>
    <text evidence="1">Binds 2 Zn(2+) ions per subunit.</text>
</comment>
<comment type="subunit">
    <text evidence="1">The RNAP catalytic core consists of 2 alpha, 1 beta, 1 beta' and 1 omega subunit. When a sigma factor is associated with the core the holoenzyme is formed, which can initiate transcription.</text>
</comment>
<comment type="similarity">
    <text evidence="1">Belongs to the RNA polymerase beta' chain family.</text>
</comment>